<organism>
    <name type="scientific">Sulfolobus acidocaldarius (strain ATCC 33909 / DSM 639 / JCM 8929 / NBRC 15157 / NCIMB 11770)</name>
    <dbReference type="NCBI Taxonomy" id="330779"/>
    <lineage>
        <taxon>Archaea</taxon>
        <taxon>Thermoproteota</taxon>
        <taxon>Thermoprotei</taxon>
        <taxon>Sulfolobales</taxon>
        <taxon>Sulfolobaceae</taxon>
        <taxon>Sulfolobus</taxon>
    </lineage>
</organism>
<proteinExistence type="inferred from homology"/>
<feature type="chain" id="PRO_0000103550" description="Dihydroxy-acid dehydratase">
    <location>
        <begin position="1"/>
        <end position="561"/>
    </location>
</feature>
<feature type="active site" description="Proton acceptor" evidence="1">
    <location>
        <position position="473"/>
    </location>
</feature>
<feature type="binding site" evidence="1">
    <location>
        <position position="51"/>
    </location>
    <ligand>
        <name>[2Fe-2S] cluster</name>
        <dbReference type="ChEBI" id="CHEBI:190135"/>
    </ligand>
</feature>
<feature type="binding site" evidence="1">
    <location>
        <position position="83"/>
    </location>
    <ligand>
        <name>Mg(2+)</name>
        <dbReference type="ChEBI" id="CHEBI:18420"/>
    </ligand>
</feature>
<feature type="binding site" evidence="1">
    <location>
        <position position="124"/>
    </location>
    <ligand>
        <name>[2Fe-2S] cluster</name>
        <dbReference type="ChEBI" id="CHEBI:190135"/>
    </ligand>
</feature>
<feature type="binding site" evidence="1">
    <location>
        <position position="125"/>
    </location>
    <ligand>
        <name>Mg(2+)</name>
        <dbReference type="ChEBI" id="CHEBI:18420"/>
    </ligand>
</feature>
<feature type="binding site" description="via carbamate group" evidence="1">
    <location>
        <position position="126"/>
    </location>
    <ligand>
        <name>Mg(2+)</name>
        <dbReference type="ChEBI" id="CHEBI:18420"/>
    </ligand>
</feature>
<feature type="binding site" evidence="1">
    <location>
        <position position="196"/>
    </location>
    <ligand>
        <name>[2Fe-2S] cluster</name>
        <dbReference type="ChEBI" id="CHEBI:190135"/>
    </ligand>
</feature>
<feature type="binding site" evidence="1">
    <location>
        <position position="448"/>
    </location>
    <ligand>
        <name>Mg(2+)</name>
        <dbReference type="ChEBI" id="CHEBI:18420"/>
    </ligand>
</feature>
<feature type="modified residue" description="N6-carboxylysine" evidence="1">
    <location>
        <position position="126"/>
    </location>
</feature>
<accession>Q4J860</accession>
<name>ILVD_SULAC</name>
<evidence type="ECO:0000255" key="1">
    <source>
        <dbReference type="HAMAP-Rule" id="MF_00012"/>
    </source>
</evidence>
<gene>
    <name evidence="1" type="primary">ilvD</name>
    <name type="ordered locus">Saci_1715</name>
</gene>
<comment type="function">
    <text evidence="1">Functions in the biosynthesis of branched-chain amino acids. Catalyzes the dehydration of (2R,3R)-2,3-dihydroxy-3-methylpentanoate (2,3-dihydroxy-3-methylvalerate) into 2-oxo-3-methylpentanoate (2-oxo-3-methylvalerate) and of (2R)-2,3-dihydroxy-3-methylbutanoate (2,3-dihydroxyisovalerate) into 2-oxo-3-methylbutanoate (2-oxoisovalerate), the penultimate precursor to L-isoleucine and L-valine, respectively.</text>
</comment>
<comment type="catalytic activity">
    <reaction evidence="1">
        <text>(2R)-2,3-dihydroxy-3-methylbutanoate = 3-methyl-2-oxobutanoate + H2O</text>
        <dbReference type="Rhea" id="RHEA:24809"/>
        <dbReference type="ChEBI" id="CHEBI:11851"/>
        <dbReference type="ChEBI" id="CHEBI:15377"/>
        <dbReference type="ChEBI" id="CHEBI:49072"/>
        <dbReference type="EC" id="4.2.1.9"/>
    </reaction>
    <physiologicalReaction direction="left-to-right" evidence="1">
        <dbReference type="Rhea" id="RHEA:24810"/>
    </physiologicalReaction>
</comment>
<comment type="catalytic activity">
    <reaction evidence="1">
        <text>(2R,3R)-2,3-dihydroxy-3-methylpentanoate = (S)-3-methyl-2-oxopentanoate + H2O</text>
        <dbReference type="Rhea" id="RHEA:27694"/>
        <dbReference type="ChEBI" id="CHEBI:15377"/>
        <dbReference type="ChEBI" id="CHEBI:35146"/>
        <dbReference type="ChEBI" id="CHEBI:49258"/>
        <dbReference type="EC" id="4.2.1.9"/>
    </reaction>
    <physiologicalReaction direction="left-to-right" evidence="1">
        <dbReference type="Rhea" id="RHEA:27695"/>
    </physiologicalReaction>
</comment>
<comment type="cofactor">
    <cofactor evidence="1">
        <name>[2Fe-2S] cluster</name>
        <dbReference type="ChEBI" id="CHEBI:190135"/>
    </cofactor>
    <text evidence="1">Binds 1 [2Fe-2S] cluster per subunit. This cluster acts as a Lewis acid cofactor.</text>
</comment>
<comment type="cofactor">
    <cofactor evidence="1">
        <name>Mg(2+)</name>
        <dbReference type="ChEBI" id="CHEBI:18420"/>
    </cofactor>
</comment>
<comment type="pathway">
    <text evidence="1">Amino-acid biosynthesis; L-isoleucine biosynthesis; L-isoleucine from 2-oxobutanoate: step 3/4.</text>
</comment>
<comment type="pathway">
    <text evidence="1">Amino-acid biosynthesis; L-valine biosynthesis; L-valine from pyruvate: step 3/4.</text>
</comment>
<comment type="subunit">
    <text evidence="1">Homodimer.</text>
</comment>
<comment type="similarity">
    <text evidence="1">Belongs to the IlvD/Edd family.</text>
</comment>
<reference key="1">
    <citation type="journal article" date="2005" name="J. Bacteriol.">
        <title>The genome of Sulfolobus acidocaldarius, a model organism of the Crenarchaeota.</title>
        <authorList>
            <person name="Chen L."/>
            <person name="Bruegger K."/>
            <person name="Skovgaard M."/>
            <person name="Redder P."/>
            <person name="She Q."/>
            <person name="Torarinsson E."/>
            <person name="Greve B."/>
            <person name="Awayez M."/>
            <person name="Zibat A."/>
            <person name="Klenk H.-P."/>
            <person name="Garrett R.A."/>
        </authorList>
    </citation>
    <scope>NUCLEOTIDE SEQUENCE [LARGE SCALE GENOMIC DNA]</scope>
    <source>
        <strain>ATCC 33909 / DSM 639 / JCM 8929 / NBRC 15157 / NCIMB 11770</strain>
    </source>
</reference>
<sequence length="561" mass="59820">MPESKLNSPLRYHGIYNAPHRAFLRSVGLTDGEINKPLVAVATAWSEAGPCNFHTLSLAHVAKEGAKEGGLTPLAFPTIVVNDNIGMGTEGMRYSLVSRDLIADMVEAQFNAHAFDALIGIGGCDKTTPGILMAMARLNVPSIYIYGGSAEPGFYLGRRLTIEDVHEAIGAFIAGKIDEHELYEIEKRAHPTVGTCSGMFTANTMGSMSEALGMALPGSASPTATSSRRIMYVRETGKAVSRLLENGVKSRDILTFEAFENAIAVLMAMGGSTNAVLHLLAIAYEAGVKLTLDDFNRISKRTPYIGSLKPGGDYVMADLDEVGGVPLVMKKLLDAGLLNGDVLTVTGKTMKQNLQEYRIPNVPHNHIVKDVKNPIKPRGGIVILKGSLAPEGAVIKVAATNVTKFEGKAKVYNSEEQAFKGIQSNEVKDGEVVVIRYEGPKGGPGMPEMLRVTAAIVGAGLSNVAMVTDGRFSGATRGPMVGHVAPEAMVGGPIAIVEDGDVIVIDVENERLDIKLSDAEIKRRLNNWSPPEPRYKSGLLAKYASLVAQSSMGAVTRPVIK</sequence>
<keyword id="KW-0001">2Fe-2S</keyword>
<keyword id="KW-0028">Amino-acid biosynthesis</keyword>
<keyword id="KW-0100">Branched-chain amino acid biosynthesis</keyword>
<keyword id="KW-0408">Iron</keyword>
<keyword id="KW-0411">Iron-sulfur</keyword>
<keyword id="KW-0456">Lyase</keyword>
<keyword id="KW-0460">Magnesium</keyword>
<keyword id="KW-0479">Metal-binding</keyword>
<keyword id="KW-1185">Reference proteome</keyword>
<dbReference type="EC" id="4.2.1.9" evidence="1"/>
<dbReference type="EMBL" id="CP000077">
    <property type="protein sequence ID" value="AAY81021.1"/>
    <property type="molecule type" value="Genomic_DNA"/>
</dbReference>
<dbReference type="RefSeq" id="WP_011278523.1">
    <property type="nucleotide sequence ID" value="NC_007181.1"/>
</dbReference>
<dbReference type="SMR" id="Q4J860"/>
<dbReference type="STRING" id="330779.Saci_1715"/>
<dbReference type="GeneID" id="14552207"/>
<dbReference type="GeneID" id="78442055"/>
<dbReference type="KEGG" id="sai:Saci_1715"/>
<dbReference type="PATRIC" id="fig|330779.12.peg.1652"/>
<dbReference type="eggNOG" id="arCOG04045">
    <property type="taxonomic scope" value="Archaea"/>
</dbReference>
<dbReference type="HOGENOM" id="CLU_014271_4_2_2"/>
<dbReference type="UniPathway" id="UPA00047">
    <property type="reaction ID" value="UER00057"/>
</dbReference>
<dbReference type="UniPathway" id="UPA00049">
    <property type="reaction ID" value="UER00061"/>
</dbReference>
<dbReference type="Proteomes" id="UP000001018">
    <property type="component" value="Chromosome"/>
</dbReference>
<dbReference type="GO" id="GO:0051537">
    <property type="term" value="F:2 iron, 2 sulfur cluster binding"/>
    <property type="evidence" value="ECO:0007669"/>
    <property type="project" value="UniProtKB-UniRule"/>
</dbReference>
<dbReference type="GO" id="GO:0004160">
    <property type="term" value="F:dihydroxy-acid dehydratase activity"/>
    <property type="evidence" value="ECO:0007669"/>
    <property type="project" value="UniProtKB-UniRule"/>
</dbReference>
<dbReference type="GO" id="GO:0000287">
    <property type="term" value="F:magnesium ion binding"/>
    <property type="evidence" value="ECO:0007669"/>
    <property type="project" value="UniProtKB-UniRule"/>
</dbReference>
<dbReference type="GO" id="GO:0009097">
    <property type="term" value="P:isoleucine biosynthetic process"/>
    <property type="evidence" value="ECO:0007669"/>
    <property type="project" value="UniProtKB-UniRule"/>
</dbReference>
<dbReference type="GO" id="GO:0009099">
    <property type="term" value="P:L-valine biosynthetic process"/>
    <property type="evidence" value="ECO:0007669"/>
    <property type="project" value="UniProtKB-UniRule"/>
</dbReference>
<dbReference type="FunFam" id="3.50.30.80:FF:000001">
    <property type="entry name" value="Dihydroxy-acid dehydratase"/>
    <property type="match status" value="1"/>
</dbReference>
<dbReference type="Gene3D" id="3.50.30.80">
    <property type="entry name" value="IlvD/EDD C-terminal domain-like"/>
    <property type="match status" value="1"/>
</dbReference>
<dbReference type="HAMAP" id="MF_00012">
    <property type="entry name" value="IlvD"/>
    <property type="match status" value="1"/>
</dbReference>
<dbReference type="InterPro" id="IPR050165">
    <property type="entry name" value="DHAD_IlvD/Edd"/>
</dbReference>
<dbReference type="InterPro" id="IPR042096">
    <property type="entry name" value="Dihydro-acid_dehy_C"/>
</dbReference>
<dbReference type="InterPro" id="IPR004404">
    <property type="entry name" value="DihydroxyA_deHydtase"/>
</dbReference>
<dbReference type="InterPro" id="IPR020558">
    <property type="entry name" value="DiOHA_6PGluconate_deHydtase_CS"/>
</dbReference>
<dbReference type="InterPro" id="IPR056740">
    <property type="entry name" value="ILV_EDD_C"/>
</dbReference>
<dbReference type="InterPro" id="IPR000581">
    <property type="entry name" value="ILV_EDD_N"/>
</dbReference>
<dbReference type="InterPro" id="IPR037237">
    <property type="entry name" value="IlvD/EDD_N"/>
</dbReference>
<dbReference type="NCBIfam" id="TIGR00110">
    <property type="entry name" value="ilvD"/>
    <property type="match status" value="1"/>
</dbReference>
<dbReference type="NCBIfam" id="NF002068">
    <property type="entry name" value="PRK00911.1"/>
    <property type="match status" value="1"/>
</dbReference>
<dbReference type="PANTHER" id="PTHR21000">
    <property type="entry name" value="DIHYDROXY-ACID DEHYDRATASE DAD"/>
    <property type="match status" value="1"/>
</dbReference>
<dbReference type="PANTHER" id="PTHR21000:SF5">
    <property type="entry name" value="DIHYDROXY-ACID DEHYDRATASE, MITOCHONDRIAL"/>
    <property type="match status" value="1"/>
</dbReference>
<dbReference type="Pfam" id="PF24877">
    <property type="entry name" value="ILV_EDD_C"/>
    <property type="match status" value="1"/>
</dbReference>
<dbReference type="Pfam" id="PF00920">
    <property type="entry name" value="ILVD_EDD_N"/>
    <property type="match status" value="1"/>
</dbReference>
<dbReference type="SUPFAM" id="SSF143975">
    <property type="entry name" value="IlvD/EDD N-terminal domain-like"/>
    <property type="match status" value="1"/>
</dbReference>
<dbReference type="SUPFAM" id="SSF52016">
    <property type="entry name" value="LeuD/IlvD-like"/>
    <property type="match status" value="1"/>
</dbReference>
<dbReference type="PROSITE" id="PS00886">
    <property type="entry name" value="ILVD_EDD_1"/>
    <property type="match status" value="1"/>
</dbReference>
<dbReference type="PROSITE" id="PS00887">
    <property type="entry name" value="ILVD_EDD_2"/>
    <property type="match status" value="1"/>
</dbReference>
<protein>
    <recommendedName>
        <fullName evidence="1">Dihydroxy-acid dehydratase</fullName>
        <shortName evidence="1">DAD</shortName>
        <ecNumber evidence="1">4.2.1.9</ecNumber>
    </recommendedName>
</protein>